<sequence length="318" mass="36011">MLHHHCRRNPELQEELQIQAAVAAGDVHTVRKMLEQGYSPNGRDANGWTLLHFSAARGKERCVRVFLEHGADPTVKDLIGGFTALHYAAMHGRARIARLMLESEYRSDIINAKSNDGWTPLHVAAHYGRDSFVRLLLEFKAEVDPLSDKGTTPLQLAIIRERSSCVKILLDHNANIDIQNGFLLRYAVIKSNHSYCRMFLQRGADTNLGRLEDGQTPLHLSALRDDVLCARMLYNYGADTNTRNYEGQTPLAVSISISGSSRPCLDFLQEVTRQPRNLQDLCRIKIRQCIGLQNLKLLDELPIAKVMKDYLKHKFDDI</sequence>
<comment type="function">
    <text evidence="2 4 5">Probable substrate-recognition component of a SCF-like ECS (Elongin-Cullin-SOCS-box protein) E3 ubiquitin-protein ligase complex which mediates the ubiquitination and subsequent proteasomal degradation of target proteins. Plays a role in spindle dynamics and genome integrity by targeting the mitotic progression protein PSRC1 for proteasomal degradation in a cell cycle-dependent manner (PubMed:27697924). Also participates in meiosis by mediating the proper attachment between kinetochores and microtubules (By similarity).</text>
</comment>
<comment type="pathway">
    <text>Protein modification; protein ubiquitination.</text>
</comment>
<comment type="subunit">
    <text evidence="4 5">Interacts with CUL5 (PubMed:16325183, PubMed:27697924). Interacts with RNF7 (PubMed:16325183). Interacts with PSRC1 (PubMed:27697924).</text>
</comment>
<comment type="interaction">
    <interactant intactId="EBI-3916346">
        <id>Q9H672</id>
    </interactant>
    <interactant intactId="EBI-10171416">
        <id>Q96JN2-2</id>
        <label>CCDC136</label>
    </interactant>
    <organismsDiffer>false</organismsDiffer>
    <experiments>4</experiments>
</comment>
<comment type="interaction">
    <interactant intactId="EBI-3916346">
        <id>Q9H672</id>
    </interactant>
    <interactant intactId="EBI-1057139">
        <id>Q93034</id>
        <label>CUL5</label>
    </interactant>
    <organismsDiffer>false</organismsDiffer>
    <experiments>5</experiments>
</comment>
<comment type="interaction">
    <interactant intactId="EBI-3916346">
        <id>Q9H672</id>
    </interactant>
    <interactant intactId="EBI-2549423">
        <id>Q6NT76</id>
        <label>HMBOX1</label>
    </interactant>
    <organismsDiffer>false</organismsDiffer>
    <experiments>4</experiments>
</comment>
<comment type="interaction">
    <interactant intactId="EBI-3916346">
        <id>Q9H672</id>
    </interactant>
    <interactant intactId="EBI-398632">
        <id>Q9UBF6</id>
        <label>RNF7</label>
    </interactant>
    <organismsDiffer>false</organismsDiffer>
    <experiments>4</experiments>
</comment>
<comment type="interaction">
    <interactant intactId="EBI-12104328">
        <id>Q9H672-2</id>
    </interactant>
    <interactant intactId="EBI-745632">
        <id>Q9NWT6</id>
        <label>HIF1AN</label>
    </interactant>
    <organismsDiffer>false</organismsDiffer>
    <experiments>3</experiments>
</comment>
<comment type="interaction">
    <interactant intactId="EBI-12104328">
        <id>Q9H672-2</id>
    </interactant>
    <interactant intactId="EBI-2549423">
        <id>Q6NT76</id>
        <label>HMBOX1</label>
    </interactant>
    <organismsDiffer>false</organismsDiffer>
    <experiments>3</experiments>
</comment>
<comment type="interaction">
    <interactant intactId="EBI-12104328">
        <id>Q9H672-2</id>
    </interactant>
    <interactant intactId="EBI-21251460">
        <id>O60260-5</id>
        <label>PRKN</label>
    </interactant>
    <organismsDiffer>false</organismsDiffer>
    <experiments>3</experiments>
</comment>
<comment type="interaction">
    <interactant intactId="EBI-12104328">
        <id>Q9H672-2</id>
    </interactant>
    <interactant intactId="EBI-747823">
        <id>Q8WV99</id>
        <label>ZFAND2B</label>
    </interactant>
    <organismsDiffer>false</organismsDiffer>
    <experiments>3</experiments>
</comment>
<comment type="alternative products">
    <event type="alternative splicing"/>
    <isoform>
        <id>Q9H672-1</id>
        <name>1</name>
        <sequence type="displayed"/>
    </isoform>
    <isoform>
        <id>Q9H672-2</id>
        <name>2</name>
        <sequence type="described" ref="VSP_008919 VSP_008920"/>
    </isoform>
</comment>
<comment type="domain">
    <text evidence="1">The SOCS box domain mediates the interaction with the Elongin BC complex, an adapter module in different E3 ubiquitin-protein ligase complexes.</text>
</comment>
<comment type="similarity">
    <text evidence="8">Belongs to the ankyrin SOCS box (ASB) family.</text>
</comment>
<reference key="1">
    <citation type="submission" date="2001-11" db="EMBL/GenBank/DDBJ databases">
        <authorList>
            <person name="Guo J.H."/>
            <person name="Zan Q."/>
            <person name="Yu L."/>
        </authorList>
    </citation>
    <scope>NUCLEOTIDE SEQUENCE [LARGE SCALE MRNA] (ISOFORM 1)</scope>
    <source>
        <tissue>Testis</tissue>
    </source>
</reference>
<reference key="2">
    <citation type="journal article" date="2004" name="Nat. Genet.">
        <title>Complete sequencing and characterization of 21,243 full-length human cDNAs.</title>
        <authorList>
            <person name="Ota T."/>
            <person name="Suzuki Y."/>
            <person name="Nishikawa T."/>
            <person name="Otsuki T."/>
            <person name="Sugiyama T."/>
            <person name="Irie R."/>
            <person name="Wakamatsu A."/>
            <person name="Hayashi K."/>
            <person name="Sato H."/>
            <person name="Nagai K."/>
            <person name="Kimura K."/>
            <person name="Makita H."/>
            <person name="Sekine M."/>
            <person name="Obayashi M."/>
            <person name="Nishi T."/>
            <person name="Shibahara T."/>
            <person name="Tanaka T."/>
            <person name="Ishii S."/>
            <person name="Yamamoto J."/>
            <person name="Saito K."/>
            <person name="Kawai Y."/>
            <person name="Isono Y."/>
            <person name="Nakamura Y."/>
            <person name="Nagahari K."/>
            <person name="Murakami K."/>
            <person name="Yasuda T."/>
            <person name="Iwayanagi T."/>
            <person name="Wagatsuma M."/>
            <person name="Shiratori A."/>
            <person name="Sudo H."/>
            <person name="Hosoiri T."/>
            <person name="Kaku Y."/>
            <person name="Kodaira H."/>
            <person name="Kondo H."/>
            <person name="Sugawara M."/>
            <person name="Takahashi M."/>
            <person name="Kanda K."/>
            <person name="Yokoi T."/>
            <person name="Furuya T."/>
            <person name="Kikkawa E."/>
            <person name="Omura Y."/>
            <person name="Abe K."/>
            <person name="Kamihara K."/>
            <person name="Katsuta N."/>
            <person name="Sato K."/>
            <person name="Tanikawa M."/>
            <person name="Yamazaki M."/>
            <person name="Ninomiya K."/>
            <person name="Ishibashi T."/>
            <person name="Yamashita H."/>
            <person name="Murakawa K."/>
            <person name="Fujimori K."/>
            <person name="Tanai H."/>
            <person name="Kimata M."/>
            <person name="Watanabe M."/>
            <person name="Hiraoka S."/>
            <person name="Chiba Y."/>
            <person name="Ishida S."/>
            <person name="Ono Y."/>
            <person name="Takiguchi S."/>
            <person name="Watanabe S."/>
            <person name="Yosida M."/>
            <person name="Hotuta T."/>
            <person name="Kusano J."/>
            <person name="Kanehori K."/>
            <person name="Takahashi-Fujii A."/>
            <person name="Hara H."/>
            <person name="Tanase T.-O."/>
            <person name="Nomura Y."/>
            <person name="Togiya S."/>
            <person name="Komai F."/>
            <person name="Hara R."/>
            <person name="Takeuchi K."/>
            <person name="Arita M."/>
            <person name="Imose N."/>
            <person name="Musashino K."/>
            <person name="Yuuki H."/>
            <person name="Oshima A."/>
            <person name="Sasaki N."/>
            <person name="Aotsuka S."/>
            <person name="Yoshikawa Y."/>
            <person name="Matsunawa H."/>
            <person name="Ichihara T."/>
            <person name="Shiohata N."/>
            <person name="Sano S."/>
            <person name="Moriya S."/>
            <person name="Momiyama H."/>
            <person name="Satoh N."/>
            <person name="Takami S."/>
            <person name="Terashima Y."/>
            <person name="Suzuki O."/>
            <person name="Nakagawa S."/>
            <person name="Senoh A."/>
            <person name="Mizoguchi H."/>
            <person name="Goto Y."/>
            <person name="Shimizu F."/>
            <person name="Wakebe H."/>
            <person name="Hishigaki H."/>
            <person name="Watanabe T."/>
            <person name="Sugiyama A."/>
            <person name="Takemoto M."/>
            <person name="Kawakami B."/>
            <person name="Yamazaki M."/>
            <person name="Watanabe K."/>
            <person name="Kumagai A."/>
            <person name="Itakura S."/>
            <person name="Fukuzumi Y."/>
            <person name="Fujimori Y."/>
            <person name="Komiyama M."/>
            <person name="Tashiro H."/>
            <person name="Tanigami A."/>
            <person name="Fujiwara T."/>
            <person name="Ono T."/>
            <person name="Yamada K."/>
            <person name="Fujii Y."/>
            <person name="Ozaki K."/>
            <person name="Hirao M."/>
            <person name="Ohmori Y."/>
            <person name="Kawabata A."/>
            <person name="Hikiji T."/>
            <person name="Kobatake N."/>
            <person name="Inagaki H."/>
            <person name="Ikema Y."/>
            <person name="Okamoto S."/>
            <person name="Okitani R."/>
            <person name="Kawakami T."/>
            <person name="Noguchi S."/>
            <person name="Itoh T."/>
            <person name="Shigeta K."/>
            <person name="Senba T."/>
            <person name="Matsumura K."/>
            <person name="Nakajima Y."/>
            <person name="Mizuno T."/>
            <person name="Morinaga M."/>
            <person name="Sasaki M."/>
            <person name="Togashi T."/>
            <person name="Oyama M."/>
            <person name="Hata H."/>
            <person name="Watanabe M."/>
            <person name="Komatsu T."/>
            <person name="Mizushima-Sugano J."/>
            <person name="Satoh T."/>
            <person name="Shirai Y."/>
            <person name="Takahashi Y."/>
            <person name="Nakagawa K."/>
            <person name="Okumura K."/>
            <person name="Nagase T."/>
            <person name="Nomura N."/>
            <person name="Kikuchi H."/>
            <person name="Masuho Y."/>
            <person name="Yamashita R."/>
            <person name="Nakai K."/>
            <person name="Yada T."/>
            <person name="Nakamura Y."/>
            <person name="Ohara O."/>
            <person name="Isogai T."/>
            <person name="Sugano S."/>
        </authorList>
    </citation>
    <scope>NUCLEOTIDE SEQUENCE [LARGE SCALE MRNA] (ISOFORMS 1 AND 2)</scope>
    <source>
        <tissue>Brain</tissue>
        <tissue>Small intestine</tissue>
    </source>
</reference>
<reference key="3">
    <citation type="submission" date="2005-07" db="EMBL/GenBank/DDBJ databases">
        <authorList>
            <person name="Mural R.J."/>
            <person name="Istrail S."/>
            <person name="Sutton G.G."/>
            <person name="Florea L."/>
            <person name="Halpern A.L."/>
            <person name="Mobarry C.M."/>
            <person name="Lippert R."/>
            <person name="Walenz B."/>
            <person name="Shatkay H."/>
            <person name="Dew I."/>
            <person name="Miller J.R."/>
            <person name="Flanigan M.J."/>
            <person name="Edwards N.J."/>
            <person name="Bolanos R."/>
            <person name="Fasulo D."/>
            <person name="Halldorsson B.V."/>
            <person name="Hannenhalli S."/>
            <person name="Turner R."/>
            <person name="Yooseph S."/>
            <person name="Lu F."/>
            <person name="Nusskern D.R."/>
            <person name="Shue B.C."/>
            <person name="Zheng X.H."/>
            <person name="Zhong F."/>
            <person name="Delcher A.L."/>
            <person name="Huson D.H."/>
            <person name="Kravitz S.A."/>
            <person name="Mouchard L."/>
            <person name="Reinert K."/>
            <person name="Remington K.A."/>
            <person name="Clark A.G."/>
            <person name="Waterman M.S."/>
            <person name="Eichler E.E."/>
            <person name="Adams M.D."/>
            <person name="Hunkapiller M.W."/>
            <person name="Myers E.W."/>
            <person name="Venter J.C."/>
        </authorList>
    </citation>
    <scope>NUCLEOTIDE SEQUENCE [LARGE SCALE GENOMIC DNA]</scope>
</reference>
<reference key="4">
    <citation type="journal article" date="2004" name="Genome Res.">
        <title>The status, quality, and expansion of the NIH full-length cDNA project: the Mammalian Gene Collection (MGC).</title>
        <authorList>
            <consortium name="The MGC Project Team"/>
        </authorList>
    </citation>
    <scope>NUCLEOTIDE SEQUENCE [LARGE SCALE MRNA] (ISOFORM 2)</scope>
    <source>
        <tissue>Bone</tissue>
    </source>
</reference>
<reference key="5">
    <citation type="journal article" date="2005" name="FEBS Lett.">
        <title>ASB proteins interact with cullin5 and Rbx2 to form E3 ubiquitin ligase complexes.</title>
        <authorList>
            <person name="Kohroki J."/>
            <person name="Nishiyama T."/>
            <person name="Nakamura T."/>
            <person name="Masuho Y."/>
        </authorList>
    </citation>
    <scope>FUNCTION AS AN E3 UBIQUITIN-PROTEIN LIGASE</scope>
    <scope>INTERACTION WITH CUL5 AND RNF7</scope>
</reference>
<reference key="6">
    <citation type="journal article" date="2016" name="J. Cell Biol.">
        <title>ASB7 regulates spindle dynamics and genome integrity by targeting DDA3 for proteasomal degradation.</title>
        <authorList>
            <person name="Uematsu K."/>
            <person name="Okumura F."/>
            <person name="Tonogai S."/>
            <person name="Joo-Okumura A."/>
            <person name="Alemayehu D.H."/>
            <person name="Nishikimi A."/>
            <person name="Fukui Y."/>
            <person name="Nakatsukasa K."/>
            <person name="Kamura T."/>
        </authorList>
    </citation>
    <scope>FUNCTION</scope>
    <scope>INTERACTION WITH PSRC1 AND CUL5</scope>
    <scope>SUBCELLULAR LOCATION</scope>
</reference>
<gene>
    <name type="primary">ASB7</name>
</gene>
<name>ASB7_HUMAN</name>
<keyword id="KW-0002">3D-structure</keyword>
<keyword id="KW-0025">Alternative splicing</keyword>
<keyword id="KW-0040">ANK repeat</keyword>
<keyword id="KW-1267">Proteomics identification</keyword>
<keyword id="KW-1185">Reference proteome</keyword>
<keyword id="KW-0677">Repeat</keyword>
<keyword id="KW-0833">Ubl conjugation pathway</keyword>
<accession>Q9H672</accession>
<accession>A8K1E5</accession>
<accession>Q6GSJ6</accession>
<accession>Q7Z4S3</accession>
<proteinExistence type="evidence at protein level"/>
<evidence type="ECO:0000250" key="1"/>
<evidence type="ECO:0000250" key="2">
    <source>
        <dbReference type="UniProtKB" id="Q91ZU0"/>
    </source>
</evidence>
<evidence type="ECO:0000255" key="3">
    <source>
        <dbReference type="PROSITE-ProRule" id="PRU00194"/>
    </source>
</evidence>
<evidence type="ECO:0000269" key="4">
    <source>
    </source>
</evidence>
<evidence type="ECO:0000269" key="5">
    <source>
    </source>
</evidence>
<evidence type="ECO:0000303" key="6">
    <source>
    </source>
</evidence>
<evidence type="ECO:0000303" key="7">
    <source>
    </source>
</evidence>
<evidence type="ECO:0000305" key="8"/>
<evidence type="ECO:0007829" key="9">
    <source>
        <dbReference type="PDB" id="8Y1U"/>
    </source>
</evidence>
<feature type="chain" id="PRO_0000066935" description="Ankyrin repeat and SOCS box protein 7">
    <location>
        <begin position="1"/>
        <end position="318"/>
    </location>
</feature>
<feature type="repeat" description="ANK 1">
    <location>
        <begin position="13"/>
        <end position="42"/>
    </location>
</feature>
<feature type="repeat" description="ANK 2">
    <location>
        <begin position="46"/>
        <end position="75"/>
    </location>
</feature>
<feature type="repeat" description="ANK 3">
    <location>
        <begin position="80"/>
        <end position="109"/>
    </location>
</feature>
<feature type="repeat" description="ANK 4">
    <location>
        <begin position="116"/>
        <end position="145"/>
    </location>
</feature>
<feature type="repeat" description="ANK 5">
    <location>
        <begin position="149"/>
        <end position="178"/>
    </location>
</feature>
<feature type="repeat" description="ANK 6">
    <location>
        <begin position="180"/>
        <end position="208"/>
    </location>
</feature>
<feature type="repeat" description="ANK 7">
    <location>
        <begin position="213"/>
        <end position="242"/>
    </location>
</feature>
<feature type="domain" description="SOCS box" evidence="3">
    <location>
        <begin position="265"/>
        <end position="318"/>
    </location>
</feature>
<feature type="splice variant" id="VSP_008919" description="In isoform 2." evidence="6 7">
    <original>RQ</original>
    <variation>SM</variation>
    <location>
        <begin position="273"/>
        <end position="274"/>
    </location>
</feature>
<feature type="splice variant" id="VSP_008920" description="In isoform 2." evidence="6 7">
    <location>
        <begin position="275"/>
        <end position="318"/>
    </location>
</feature>
<feature type="sequence conflict" description="In Ref. 2; BAB15392." evidence="8" ref="2">
    <original>R</original>
    <variation>K</variation>
    <location>
        <position position="162"/>
    </location>
</feature>
<feature type="helix" evidence="9">
    <location>
        <begin position="13"/>
        <end position="24"/>
    </location>
</feature>
<feature type="helix" evidence="9">
    <location>
        <begin position="27"/>
        <end position="35"/>
    </location>
</feature>
<feature type="helix" evidence="9">
    <location>
        <begin position="50"/>
        <end position="56"/>
    </location>
</feature>
<feature type="helix" evidence="9">
    <location>
        <begin position="60"/>
        <end position="68"/>
    </location>
</feature>
<feature type="turn" evidence="9">
    <location>
        <begin position="78"/>
        <end position="80"/>
    </location>
</feature>
<feature type="helix" evidence="9">
    <location>
        <begin position="84"/>
        <end position="91"/>
    </location>
</feature>
<feature type="helix" evidence="9">
    <location>
        <begin position="94"/>
        <end position="102"/>
    </location>
</feature>
<feature type="helix" evidence="9">
    <location>
        <begin position="106"/>
        <end position="109"/>
    </location>
</feature>
<feature type="helix" evidence="9">
    <location>
        <begin position="120"/>
        <end position="127"/>
    </location>
</feature>
<feature type="helix" evidence="9">
    <location>
        <begin position="130"/>
        <end position="138"/>
    </location>
</feature>
<feature type="helix" evidence="9">
    <location>
        <begin position="153"/>
        <end position="159"/>
    </location>
</feature>
<feature type="helix" evidence="9">
    <location>
        <begin position="163"/>
        <end position="171"/>
    </location>
</feature>
<feature type="helix" evidence="9">
    <location>
        <begin position="178"/>
        <end position="190"/>
    </location>
</feature>
<feature type="helix" evidence="9">
    <location>
        <begin position="193"/>
        <end position="201"/>
    </location>
</feature>
<feature type="turn" evidence="9">
    <location>
        <begin position="211"/>
        <end position="213"/>
    </location>
</feature>
<feature type="helix" evidence="9">
    <location>
        <begin position="217"/>
        <end position="223"/>
    </location>
</feature>
<feature type="helix" evidence="9">
    <location>
        <begin position="227"/>
        <end position="235"/>
    </location>
</feature>
<feature type="helix" evidence="9">
    <location>
        <begin position="250"/>
        <end position="255"/>
    </location>
</feature>
<feature type="helix" evidence="9">
    <location>
        <begin position="263"/>
        <end position="273"/>
    </location>
</feature>
<feature type="helix" evidence="9">
    <location>
        <begin position="278"/>
        <end position="290"/>
    </location>
</feature>
<feature type="turn" evidence="9">
    <location>
        <begin position="295"/>
        <end position="299"/>
    </location>
</feature>
<feature type="strand" evidence="9">
    <location>
        <begin position="300"/>
        <end position="303"/>
    </location>
</feature>
<feature type="helix" evidence="9">
    <location>
        <begin position="305"/>
        <end position="311"/>
    </location>
</feature>
<organism>
    <name type="scientific">Homo sapiens</name>
    <name type="common">Human</name>
    <dbReference type="NCBI Taxonomy" id="9606"/>
    <lineage>
        <taxon>Eukaryota</taxon>
        <taxon>Metazoa</taxon>
        <taxon>Chordata</taxon>
        <taxon>Craniata</taxon>
        <taxon>Vertebrata</taxon>
        <taxon>Euteleostomi</taxon>
        <taxon>Mammalia</taxon>
        <taxon>Eutheria</taxon>
        <taxon>Euarchontoglires</taxon>
        <taxon>Primates</taxon>
        <taxon>Haplorrhini</taxon>
        <taxon>Catarrhini</taxon>
        <taxon>Hominidae</taxon>
        <taxon>Homo</taxon>
    </lineage>
</organism>
<protein>
    <recommendedName>
        <fullName>Ankyrin repeat and SOCS box protein 7</fullName>
        <shortName>ASB-7</shortName>
    </recommendedName>
</protein>
<dbReference type="EMBL" id="AF451994">
    <property type="protein sequence ID" value="AAP97683.1"/>
    <property type="molecule type" value="mRNA"/>
</dbReference>
<dbReference type="EMBL" id="AK026204">
    <property type="protein sequence ID" value="BAB15392.1"/>
    <property type="molecule type" value="mRNA"/>
</dbReference>
<dbReference type="EMBL" id="AK289860">
    <property type="protein sequence ID" value="BAF82549.1"/>
    <property type="molecule type" value="mRNA"/>
</dbReference>
<dbReference type="EMBL" id="CH471101">
    <property type="protein sequence ID" value="EAX02274.1"/>
    <property type="molecule type" value="Genomic_DNA"/>
</dbReference>
<dbReference type="EMBL" id="CH471101">
    <property type="protein sequence ID" value="EAX02276.1"/>
    <property type="molecule type" value="Genomic_DNA"/>
</dbReference>
<dbReference type="EMBL" id="BC063581">
    <property type="protein sequence ID" value="AAH63581.1"/>
    <property type="molecule type" value="mRNA"/>
</dbReference>
<dbReference type="CCDS" id="CCDS10387.1">
    <molecule id="Q9H672-1"/>
</dbReference>
<dbReference type="CCDS" id="CCDS10388.1">
    <molecule id="Q9H672-2"/>
</dbReference>
<dbReference type="RefSeq" id="NP_078984.2">
    <molecule id="Q9H672-2"/>
    <property type="nucleotide sequence ID" value="NM_024708.3"/>
</dbReference>
<dbReference type="RefSeq" id="NP_937886.1">
    <molecule id="Q9H672-1"/>
    <property type="nucleotide sequence ID" value="NM_198243.3"/>
</dbReference>
<dbReference type="PDB" id="8Y1U">
    <property type="method" value="X-ray"/>
    <property type="resolution" value="2.41 A"/>
    <property type="chains" value="A=11-318"/>
</dbReference>
<dbReference type="PDBsum" id="8Y1U"/>
<dbReference type="SMR" id="Q9H672"/>
<dbReference type="BioGRID" id="126613">
    <property type="interactions" value="57"/>
</dbReference>
<dbReference type="CORUM" id="Q9H672"/>
<dbReference type="DIP" id="DIP-43701N"/>
<dbReference type="FunCoup" id="Q9H672">
    <property type="interactions" value="1665"/>
</dbReference>
<dbReference type="IntAct" id="Q9H672">
    <property type="interactions" value="42"/>
</dbReference>
<dbReference type="MINT" id="Q9H672"/>
<dbReference type="STRING" id="9606.ENSP00000328327"/>
<dbReference type="iPTMnet" id="Q9H672"/>
<dbReference type="PhosphoSitePlus" id="Q9H672"/>
<dbReference type="BioMuta" id="ASB7"/>
<dbReference type="DMDM" id="38372887"/>
<dbReference type="jPOST" id="Q9H672"/>
<dbReference type="MassIVE" id="Q9H672"/>
<dbReference type="PaxDb" id="9606-ENSP00000328327"/>
<dbReference type="PeptideAtlas" id="Q9H672"/>
<dbReference type="ProteomicsDB" id="80962">
    <molecule id="Q9H672-1"/>
</dbReference>
<dbReference type="ProteomicsDB" id="80963">
    <molecule id="Q9H672-2"/>
</dbReference>
<dbReference type="Pumba" id="Q9H672"/>
<dbReference type="Antibodypedia" id="1147">
    <property type="antibodies" value="149 antibodies from 20 providers"/>
</dbReference>
<dbReference type="DNASU" id="140460"/>
<dbReference type="Ensembl" id="ENST00000332783.12">
    <molecule id="Q9H672-1"/>
    <property type="protein sequence ID" value="ENSP00000328327.8"/>
    <property type="gene ID" value="ENSG00000183475.13"/>
</dbReference>
<dbReference type="Ensembl" id="ENST00000343276.4">
    <molecule id="Q9H672-2"/>
    <property type="protein sequence ID" value="ENSP00000339819.4"/>
    <property type="gene ID" value="ENSG00000183475.13"/>
</dbReference>
<dbReference type="GeneID" id="140460"/>
<dbReference type="KEGG" id="hsa:140460"/>
<dbReference type="MANE-Select" id="ENST00000332783.12">
    <property type="protein sequence ID" value="ENSP00000328327.8"/>
    <property type="RefSeq nucleotide sequence ID" value="NM_198243.3"/>
    <property type="RefSeq protein sequence ID" value="NP_937886.1"/>
</dbReference>
<dbReference type="UCSC" id="uc002bwj.4">
    <molecule id="Q9H672-1"/>
    <property type="organism name" value="human"/>
</dbReference>
<dbReference type="AGR" id="HGNC:17182"/>
<dbReference type="CTD" id="140460"/>
<dbReference type="GeneCards" id="ASB7"/>
<dbReference type="HGNC" id="HGNC:17182">
    <property type="gene designation" value="ASB7"/>
</dbReference>
<dbReference type="HPA" id="ENSG00000183475">
    <property type="expression patterns" value="Low tissue specificity"/>
</dbReference>
<dbReference type="MIM" id="615052">
    <property type="type" value="gene"/>
</dbReference>
<dbReference type="neXtProt" id="NX_Q9H672"/>
<dbReference type="OpenTargets" id="ENSG00000183475"/>
<dbReference type="PharmGKB" id="PA25035"/>
<dbReference type="VEuPathDB" id="HostDB:ENSG00000183475"/>
<dbReference type="eggNOG" id="KOG4177">
    <property type="taxonomic scope" value="Eukaryota"/>
</dbReference>
<dbReference type="GeneTree" id="ENSGT00940000158068"/>
<dbReference type="HOGENOM" id="CLU_084795_0_0_1"/>
<dbReference type="InParanoid" id="Q9H672"/>
<dbReference type="OMA" id="CNGWTLL"/>
<dbReference type="OrthoDB" id="539213at2759"/>
<dbReference type="PAN-GO" id="Q9H672">
    <property type="GO annotations" value="0 GO annotations based on evolutionary models"/>
</dbReference>
<dbReference type="PhylomeDB" id="Q9H672"/>
<dbReference type="TreeFam" id="TF331695"/>
<dbReference type="PathwayCommons" id="Q9H672"/>
<dbReference type="Reactome" id="R-HSA-8951664">
    <property type="pathway name" value="Neddylation"/>
</dbReference>
<dbReference type="Reactome" id="R-HSA-983168">
    <property type="pathway name" value="Antigen processing: Ubiquitination &amp; Proteasome degradation"/>
</dbReference>
<dbReference type="SignaLink" id="Q9H672"/>
<dbReference type="UniPathway" id="UPA00143"/>
<dbReference type="BioGRID-ORCS" id="140460">
    <property type="hits" value="14 hits in 1204 CRISPR screens"/>
</dbReference>
<dbReference type="ChiTaRS" id="ASB7">
    <property type="organism name" value="human"/>
</dbReference>
<dbReference type="GenomeRNAi" id="140460"/>
<dbReference type="Pharos" id="Q9H672">
    <property type="development level" value="Tbio"/>
</dbReference>
<dbReference type="PRO" id="PR:Q9H672"/>
<dbReference type="Proteomes" id="UP000005640">
    <property type="component" value="Chromosome 15"/>
</dbReference>
<dbReference type="RNAct" id="Q9H672">
    <property type="molecule type" value="protein"/>
</dbReference>
<dbReference type="Bgee" id="ENSG00000183475">
    <property type="expression patterns" value="Expressed in buccal mucosa cell and 159 other cell types or tissues"/>
</dbReference>
<dbReference type="ExpressionAtlas" id="Q9H672">
    <property type="expression patterns" value="baseline and differential"/>
</dbReference>
<dbReference type="GO" id="GO:0005829">
    <property type="term" value="C:cytosol"/>
    <property type="evidence" value="ECO:0000304"/>
    <property type="project" value="Reactome"/>
</dbReference>
<dbReference type="GO" id="GO:0035556">
    <property type="term" value="P:intracellular signal transduction"/>
    <property type="evidence" value="ECO:0007669"/>
    <property type="project" value="InterPro"/>
</dbReference>
<dbReference type="GO" id="GO:0016567">
    <property type="term" value="P:protein ubiquitination"/>
    <property type="evidence" value="ECO:0007669"/>
    <property type="project" value="UniProtKB-UniPathway"/>
</dbReference>
<dbReference type="CDD" id="cd03726">
    <property type="entry name" value="SOCS_ASB7"/>
    <property type="match status" value="1"/>
</dbReference>
<dbReference type="FunFam" id="1.10.750.20:FF:000004">
    <property type="entry name" value="Ankyrin repeat and SOCS box containing 7"/>
    <property type="match status" value="1"/>
</dbReference>
<dbReference type="FunFam" id="1.25.40.20:FF:000147">
    <property type="entry name" value="Ankyrin repeat and SOCS box containing 7"/>
    <property type="match status" value="1"/>
</dbReference>
<dbReference type="Gene3D" id="1.25.40.20">
    <property type="entry name" value="Ankyrin repeat-containing domain"/>
    <property type="match status" value="2"/>
</dbReference>
<dbReference type="Gene3D" id="1.10.750.20">
    <property type="entry name" value="SOCS box"/>
    <property type="match status" value="1"/>
</dbReference>
<dbReference type="InterPro" id="IPR002110">
    <property type="entry name" value="Ankyrin_rpt"/>
</dbReference>
<dbReference type="InterPro" id="IPR036770">
    <property type="entry name" value="Ankyrin_rpt-contain_sf"/>
</dbReference>
<dbReference type="InterPro" id="IPR037326">
    <property type="entry name" value="ASB7_SOCS"/>
</dbReference>
<dbReference type="InterPro" id="IPR001496">
    <property type="entry name" value="SOCS_box"/>
</dbReference>
<dbReference type="InterPro" id="IPR036036">
    <property type="entry name" value="SOCS_box-like_dom_sf"/>
</dbReference>
<dbReference type="PANTHER" id="PTHR24173:SF88">
    <property type="entry name" value="ANKYRIN REPEAT AND SOCS BOX CONTAINING 7"/>
    <property type="match status" value="1"/>
</dbReference>
<dbReference type="PANTHER" id="PTHR24173">
    <property type="entry name" value="ANKYRIN REPEAT CONTAINING"/>
    <property type="match status" value="1"/>
</dbReference>
<dbReference type="Pfam" id="PF12796">
    <property type="entry name" value="Ank_2"/>
    <property type="match status" value="3"/>
</dbReference>
<dbReference type="Pfam" id="PF07525">
    <property type="entry name" value="SOCS_box"/>
    <property type="match status" value="1"/>
</dbReference>
<dbReference type="PRINTS" id="PR01415">
    <property type="entry name" value="ANKYRIN"/>
</dbReference>
<dbReference type="SMART" id="SM00248">
    <property type="entry name" value="ANK"/>
    <property type="match status" value="7"/>
</dbReference>
<dbReference type="SMART" id="SM00253">
    <property type="entry name" value="SOCS"/>
    <property type="match status" value="1"/>
</dbReference>
<dbReference type="SMART" id="SM00969">
    <property type="entry name" value="SOCS_box"/>
    <property type="match status" value="1"/>
</dbReference>
<dbReference type="SUPFAM" id="SSF48403">
    <property type="entry name" value="Ankyrin repeat"/>
    <property type="match status" value="1"/>
</dbReference>
<dbReference type="SUPFAM" id="SSF158235">
    <property type="entry name" value="SOCS box-like"/>
    <property type="match status" value="1"/>
</dbReference>
<dbReference type="PROSITE" id="PS50297">
    <property type="entry name" value="ANK_REP_REGION"/>
    <property type="match status" value="1"/>
</dbReference>
<dbReference type="PROSITE" id="PS50088">
    <property type="entry name" value="ANK_REPEAT"/>
    <property type="match status" value="5"/>
</dbReference>
<dbReference type="PROSITE" id="PS50225">
    <property type="entry name" value="SOCS"/>
    <property type="match status" value="1"/>
</dbReference>